<proteinExistence type="inferred from homology"/>
<organism>
    <name type="scientific">Drosophila pseudoobscura pseudoobscura</name>
    <name type="common">Fruit fly</name>
    <dbReference type="NCBI Taxonomy" id="46245"/>
    <lineage>
        <taxon>Eukaryota</taxon>
        <taxon>Metazoa</taxon>
        <taxon>Ecdysozoa</taxon>
        <taxon>Arthropoda</taxon>
        <taxon>Hexapoda</taxon>
        <taxon>Insecta</taxon>
        <taxon>Pterygota</taxon>
        <taxon>Neoptera</taxon>
        <taxon>Endopterygota</taxon>
        <taxon>Diptera</taxon>
        <taxon>Brachycera</taxon>
        <taxon>Muscomorpha</taxon>
        <taxon>Ephydroidea</taxon>
        <taxon>Drosophilidae</taxon>
        <taxon>Drosophila</taxon>
        <taxon>Sophophora</taxon>
    </lineage>
</organism>
<gene>
    <name type="ORF">GA24324</name>
</gene>
<sequence>MITDVQLAIFSNVLGVFLFLLVVAYHYINANTGKSSPKAK</sequence>
<name>OST4_DROPS</name>
<reference evidence="5" key="1">
    <citation type="journal article" date="2005" name="Genome Res.">
        <title>Comparative genome sequencing of Drosophila pseudoobscura: chromosomal, gene, and cis-element evolution.</title>
        <authorList>
            <person name="Richards S."/>
            <person name="Liu Y."/>
            <person name="Bettencourt B.R."/>
            <person name="Hradecky P."/>
            <person name="Letovsky S."/>
            <person name="Nielsen R."/>
            <person name="Thornton K."/>
            <person name="Hubisz M.J."/>
            <person name="Chen R."/>
            <person name="Meisel R.P."/>
            <person name="Couronne O."/>
            <person name="Hua S."/>
            <person name="Smith M.A."/>
            <person name="Zhang P."/>
            <person name="Liu J."/>
            <person name="Bussemaker H.J."/>
            <person name="van Batenburg M.F."/>
            <person name="Howells S.L."/>
            <person name="Scherer S.E."/>
            <person name="Sodergren E."/>
            <person name="Matthews B.B."/>
            <person name="Crosby M.A."/>
            <person name="Schroeder A.J."/>
            <person name="Ortiz-Barrientos D."/>
            <person name="Rives C.M."/>
            <person name="Metzker M.L."/>
            <person name="Muzny D.M."/>
            <person name="Scott G."/>
            <person name="Steffen D."/>
            <person name="Wheeler D.A."/>
            <person name="Worley K.C."/>
            <person name="Havlak P."/>
            <person name="Durbin K.J."/>
            <person name="Egan A."/>
            <person name="Gill R."/>
            <person name="Hume J."/>
            <person name="Morgan M.B."/>
            <person name="Miner G."/>
            <person name="Hamilton C."/>
            <person name="Huang Y."/>
            <person name="Waldron L."/>
            <person name="Verduzco D."/>
            <person name="Clerc-Blankenburg K.P."/>
            <person name="Dubchak I."/>
            <person name="Noor M.A.F."/>
            <person name="Anderson W."/>
            <person name="White K.P."/>
            <person name="Clark A.G."/>
            <person name="Schaeffer S.W."/>
            <person name="Gelbart W.M."/>
            <person name="Weinstock G.M."/>
            <person name="Gibbs R.A."/>
        </authorList>
    </citation>
    <scope>NUCLEOTIDE SEQUENCE [LARGE SCALE GENOMIC DNA]</scope>
    <source>
        <strain>MV2-25 / Tucson 14011-0121.94</strain>
    </source>
</reference>
<comment type="function">
    <text evidence="2">Subunit of the oligosaccharyl transferase (OST) complex that catalyzes the initial transfer of a defined glycan (Glc(3)Man(9)GlcNAc(2) in eukaryotes) from the lipid carrier dolichol-pyrophosphate to an asparagine residue within an Asn-X-Ser/Thr consensus motif in nascent polypeptide chains, the first step in protein N-glycosylation. N-glycosylation occurs cotranslationally and the complex associates with the Sec61 complex at the channel-forming translocon complex that mediates protein translocation across the endoplasmic reticulum (ER). All subunits are required for a maximal enzyme activity.</text>
</comment>
<comment type="subunit">
    <text evidence="2">Component of the oligosaccharyltransferase (OST) complex.</text>
</comment>
<comment type="subcellular location">
    <subcellularLocation>
        <location evidence="1">Endoplasmic reticulum membrane</location>
        <topology evidence="1">Single-pass type III membrane protein</topology>
    </subcellularLocation>
</comment>
<comment type="similarity">
    <text evidence="4">Belongs to the OST4 family.</text>
</comment>
<evidence type="ECO:0000250" key="1"/>
<evidence type="ECO:0000250" key="2">
    <source>
        <dbReference type="UniProtKB" id="P0C6T2"/>
    </source>
</evidence>
<evidence type="ECO:0000250" key="3">
    <source>
        <dbReference type="UniProtKB" id="Q99380"/>
    </source>
</evidence>
<evidence type="ECO:0000255" key="4"/>
<evidence type="ECO:0000312" key="5">
    <source>
        <dbReference type="EMBL" id="EDY69109.1"/>
    </source>
</evidence>
<dbReference type="EMBL" id="CM000071">
    <property type="protein sequence ID" value="EDY69109.1"/>
    <property type="molecule type" value="Genomic_DNA"/>
</dbReference>
<dbReference type="SMR" id="B5E1E8"/>
<dbReference type="FunCoup" id="B5E1E8">
    <property type="interactions" value="108"/>
</dbReference>
<dbReference type="STRING" id="46245.B5E1E8"/>
<dbReference type="EnsemblMetazoa" id="FBtr0278021">
    <property type="protein sequence ID" value="FBpp0276459"/>
    <property type="gene ID" value="FBgn0245721"/>
</dbReference>
<dbReference type="KEGG" id="dpo:6898510"/>
<dbReference type="eggNOG" id="ENOG502TACJ">
    <property type="taxonomic scope" value="Eukaryota"/>
</dbReference>
<dbReference type="HOGENOM" id="CLU_186352_2_0_1"/>
<dbReference type="InParanoid" id="B5E1E8"/>
<dbReference type="Proteomes" id="UP000001819">
    <property type="component" value="Chromosome 3"/>
</dbReference>
<dbReference type="Bgee" id="FBgn0245721">
    <property type="expression patterns" value="Expressed in male reproductive system and 2 other cell types or tissues"/>
</dbReference>
<dbReference type="GO" id="GO:0008250">
    <property type="term" value="C:oligosaccharyltransferase complex"/>
    <property type="evidence" value="ECO:0000250"/>
    <property type="project" value="UniProtKB"/>
</dbReference>
<dbReference type="GO" id="GO:0006487">
    <property type="term" value="P:protein N-linked glycosylation"/>
    <property type="evidence" value="ECO:0000250"/>
    <property type="project" value="UniProtKB"/>
</dbReference>
<dbReference type="GO" id="GO:0018279">
    <property type="term" value="P:protein N-linked glycosylation via asparagine"/>
    <property type="evidence" value="ECO:0007669"/>
    <property type="project" value="TreeGrafter"/>
</dbReference>
<dbReference type="InterPro" id="IPR018943">
    <property type="entry name" value="Oligosaccaryltransferase"/>
</dbReference>
<dbReference type="InterPro" id="IPR051307">
    <property type="entry name" value="OST4"/>
</dbReference>
<dbReference type="InterPro" id="IPR036330">
    <property type="entry name" value="Ost4p_sf"/>
</dbReference>
<dbReference type="PANTHER" id="PTHR48164">
    <property type="entry name" value="DOLICHYL-DIPHOSPHOOLIGOSACCHARIDE--PROTEIN GLYCOSYLTRANSFERASE SUBUNIT 4"/>
    <property type="match status" value="1"/>
</dbReference>
<dbReference type="PANTHER" id="PTHR48164:SF1">
    <property type="entry name" value="DOLICHYL-DIPHOSPHOOLIGOSACCHARIDE--PROTEIN GLYCOSYLTRANSFERASE SUBUNIT 4"/>
    <property type="match status" value="1"/>
</dbReference>
<dbReference type="Pfam" id="PF10215">
    <property type="entry name" value="Ost4"/>
    <property type="match status" value="1"/>
</dbReference>
<dbReference type="SUPFAM" id="SSF103464">
    <property type="entry name" value="Oligosaccharyltransferase subunit ost4p"/>
    <property type="match status" value="1"/>
</dbReference>
<keyword id="KW-0256">Endoplasmic reticulum</keyword>
<keyword id="KW-0472">Membrane</keyword>
<keyword id="KW-1185">Reference proteome</keyword>
<keyword id="KW-0735">Signal-anchor</keyword>
<keyword id="KW-0812">Transmembrane</keyword>
<keyword id="KW-1133">Transmembrane helix</keyword>
<accession>B5E1E8</accession>
<protein>
    <recommendedName>
        <fullName evidence="3">Dolichyl-diphosphooligosaccharide--protein glycosyltransferase subunit 4</fullName>
    </recommendedName>
</protein>
<feature type="chain" id="PRO_0000386613" description="Dolichyl-diphosphooligosaccharide--protein glycosyltransferase subunit 4">
    <location>
        <begin position="1"/>
        <end position="40"/>
    </location>
</feature>
<feature type="topological domain" description="Lumenal" evidence="4">
    <location>
        <begin position="1"/>
        <end position="4"/>
    </location>
</feature>
<feature type="transmembrane region" description="Helical" evidence="4">
    <location>
        <begin position="5"/>
        <end position="25"/>
    </location>
</feature>
<feature type="topological domain" description="Cytoplasmic" evidence="4">
    <location>
        <begin position="26"/>
        <end position="40"/>
    </location>
</feature>